<evidence type="ECO:0000255" key="1">
    <source>
        <dbReference type="HAMAP-Rule" id="MF_01187"/>
    </source>
</evidence>
<accession>P0AB00</accession>
<accession>P75844</accession>
<sequence length="60" mass="6855">MDHRLLEIIACPVCNGKLWYNQEKQELICKLDNLAFPLRDGIPVLLETEARVLTADESKS</sequence>
<feature type="chain" id="PRO_0000168765" description="UPF0434 protein YcaR">
    <location>
        <begin position="1"/>
        <end position="60"/>
    </location>
</feature>
<reference key="1">
    <citation type="journal article" date="2002" name="Nucleic Acids Res.">
        <title>Genome sequence of Shigella flexneri 2a: insights into pathogenicity through comparison with genomes of Escherichia coli K12 and O157.</title>
        <authorList>
            <person name="Jin Q."/>
            <person name="Yuan Z."/>
            <person name="Xu J."/>
            <person name="Wang Y."/>
            <person name="Shen Y."/>
            <person name="Lu W."/>
            <person name="Wang J."/>
            <person name="Liu H."/>
            <person name="Yang J."/>
            <person name="Yang F."/>
            <person name="Zhang X."/>
            <person name="Zhang J."/>
            <person name="Yang G."/>
            <person name="Wu H."/>
            <person name="Qu D."/>
            <person name="Dong J."/>
            <person name="Sun L."/>
            <person name="Xue Y."/>
            <person name="Zhao A."/>
            <person name="Gao Y."/>
            <person name="Zhu J."/>
            <person name="Kan B."/>
            <person name="Ding K."/>
            <person name="Chen S."/>
            <person name="Cheng H."/>
            <person name="Yao Z."/>
            <person name="He B."/>
            <person name="Chen R."/>
            <person name="Ma D."/>
            <person name="Qiang B."/>
            <person name="Wen Y."/>
            <person name="Hou Y."/>
            <person name="Yu J."/>
        </authorList>
    </citation>
    <scope>NUCLEOTIDE SEQUENCE [LARGE SCALE GENOMIC DNA]</scope>
    <source>
        <strain>301 / Serotype 2a</strain>
    </source>
</reference>
<reference key="2">
    <citation type="journal article" date="2003" name="Infect. Immun.">
        <title>Complete genome sequence and comparative genomics of Shigella flexneri serotype 2a strain 2457T.</title>
        <authorList>
            <person name="Wei J."/>
            <person name="Goldberg M.B."/>
            <person name="Burland V."/>
            <person name="Venkatesan M.M."/>
            <person name="Deng W."/>
            <person name="Fournier G."/>
            <person name="Mayhew G.F."/>
            <person name="Plunkett G. III"/>
            <person name="Rose D.J."/>
            <person name="Darling A."/>
            <person name="Mau B."/>
            <person name="Perna N.T."/>
            <person name="Payne S.M."/>
            <person name="Runyen-Janecky L.J."/>
            <person name="Zhou S."/>
            <person name="Schwartz D.C."/>
            <person name="Blattner F.R."/>
        </authorList>
    </citation>
    <scope>NUCLEOTIDE SEQUENCE [LARGE SCALE GENOMIC DNA]</scope>
    <source>
        <strain>ATCC 700930 / 2457T / Serotype 2a</strain>
    </source>
</reference>
<dbReference type="EMBL" id="AE005674">
    <property type="protein sequence ID" value="AAN42542.1"/>
    <property type="molecule type" value="Genomic_DNA"/>
</dbReference>
<dbReference type="EMBL" id="AE014073">
    <property type="protein sequence ID" value="AAP16428.1"/>
    <property type="molecule type" value="Genomic_DNA"/>
</dbReference>
<dbReference type="RefSeq" id="NP_706835.1">
    <property type="nucleotide sequence ID" value="NC_004337.2"/>
</dbReference>
<dbReference type="RefSeq" id="WP_000350058.1">
    <property type="nucleotide sequence ID" value="NZ_WPGW01000072.1"/>
</dbReference>
<dbReference type="SMR" id="P0AB00"/>
<dbReference type="STRING" id="198214.SF0913"/>
<dbReference type="PaxDb" id="198214-SF0913"/>
<dbReference type="GeneID" id="1023852"/>
<dbReference type="GeneID" id="93776498"/>
<dbReference type="KEGG" id="sfl:SF0913"/>
<dbReference type="KEGG" id="sfx:S0977"/>
<dbReference type="PATRIC" id="fig|198214.7.peg.1064"/>
<dbReference type="HOGENOM" id="CLU_155659_3_1_6"/>
<dbReference type="Proteomes" id="UP000001006">
    <property type="component" value="Chromosome"/>
</dbReference>
<dbReference type="Proteomes" id="UP000002673">
    <property type="component" value="Chromosome"/>
</dbReference>
<dbReference type="GO" id="GO:0005829">
    <property type="term" value="C:cytosol"/>
    <property type="evidence" value="ECO:0007669"/>
    <property type="project" value="TreeGrafter"/>
</dbReference>
<dbReference type="FunFam" id="2.20.25.10:FF:000002">
    <property type="entry name" value="UPF0434 protein YcaR"/>
    <property type="match status" value="1"/>
</dbReference>
<dbReference type="Gene3D" id="2.20.25.10">
    <property type="match status" value="1"/>
</dbReference>
<dbReference type="HAMAP" id="MF_01187">
    <property type="entry name" value="UPF0434"/>
    <property type="match status" value="1"/>
</dbReference>
<dbReference type="InterPro" id="IPR005651">
    <property type="entry name" value="Trm112-like"/>
</dbReference>
<dbReference type="NCBIfam" id="NF008806">
    <property type="entry name" value="PRK11827.1"/>
    <property type="match status" value="1"/>
</dbReference>
<dbReference type="PANTHER" id="PTHR33505:SF4">
    <property type="entry name" value="PROTEIN PREY, MITOCHONDRIAL"/>
    <property type="match status" value="1"/>
</dbReference>
<dbReference type="PANTHER" id="PTHR33505">
    <property type="entry name" value="ZGC:162634"/>
    <property type="match status" value="1"/>
</dbReference>
<dbReference type="Pfam" id="PF03966">
    <property type="entry name" value="Trm112p"/>
    <property type="match status" value="1"/>
</dbReference>
<dbReference type="SUPFAM" id="SSF158997">
    <property type="entry name" value="Trm112p-like"/>
    <property type="match status" value="1"/>
</dbReference>
<name>YCAR_SHIFL</name>
<protein>
    <recommendedName>
        <fullName evidence="1">UPF0434 protein YcaR</fullName>
    </recommendedName>
</protein>
<proteinExistence type="inferred from homology"/>
<gene>
    <name evidence="1" type="primary">ycaR</name>
    <name type="ordered locus">SF0913</name>
    <name type="ordered locus">S0977</name>
</gene>
<comment type="similarity">
    <text evidence="1">Belongs to the UPF0434 family.</text>
</comment>
<organism>
    <name type="scientific">Shigella flexneri</name>
    <dbReference type="NCBI Taxonomy" id="623"/>
    <lineage>
        <taxon>Bacteria</taxon>
        <taxon>Pseudomonadati</taxon>
        <taxon>Pseudomonadota</taxon>
        <taxon>Gammaproteobacteria</taxon>
        <taxon>Enterobacterales</taxon>
        <taxon>Enterobacteriaceae</taxon>
        <taxon>Shigella</taxon>
    </lineage>
</organism>
<keyword id="KW-1185">Reference proteome</keyword>